<feature type="signal peptide" evidence="2">
    <location>
        <begin position="1"/>
        <end position="19"/>
    </location>
</feature>
<feature type="propeptide" id="PRO_0000452536" evidence="6">
    <location>
        <begin position="20"/>
        <end position="33"/>
    </location>
</feature>
<feature type="chain" id="PRO_5018045393" description="U-Asilidin(12)-Dg3a" evidence="3">
    <location>
        <begin position="34"/>
        <end position="69"/>
    </location>
</feature>
<feature type="disulfide bond" evidence="1">
    <location>
        <begin position="36"/>
        <end position="59"/>
    </location>
</feature>
<feature type="disulfide bond" evidence="1">
    <location>
        <begin position="45"/>
        <end position="65"/>
    </location>
</feature>
<feature type="disulfide bond" evidence="1">
    <location>
        <begin position="49"/>
        <end position="67"/>
    </location>
</feature>
<evidence type="ECO:0000250" key="1">
    <source>
        <dbReference type="UniProtKB" id="A0A3G5BIB1"/>
    </source>
</evidence>
<evidence type="ECO:0000255" key="2"/>
<evidence type="ECO:0000269" key="3">
    <source>
    </source>
</evidence>
<evidence type="ECO:0000303" key="4">
    <source>
    </source>
</evidence>
<evidence type="ECO:0000305" key="5"/>
<evidence type="ECO:0000305" key="6">
    <source>
    </source>
</evidence>
<sequence length="69" mass="7932">MRFLNIFLFFAAIIAFATASQVFEEDEIDMEPRITCDLIGNERLCVLHCLAKGFRGGWCDGRKVCNCRR</sequence>
<accession>A0A3G5BIB4</accession>
<comment type="function">
    <text evidence="1">Moderately increases Kv11.1/KCNH2/ERG1 currents and shifts the voltage-dependence of the channel activation to hyperpolarised potentials (By similarity). In vivo, induces neurotoxic effects when injected into insects (tested on L.cuprina and A.domesticus) (By similarity).</text>
</comment>
<comment type="subcellular location">
    <subcellularLocation>
        <location evidence="3">Secreted</location>
    </subcellularLocation>
</comment>
<comment type="tissue specificity">
    <text evidence="6">Expressed by the venom gland.</text>
</comment>
<comment type="domain">
    <text evidence="6">Has the structural arrangement of an alpha-helix connected to antiparallel beta-sheets by disulfide bonds (CS-alpha/beta).</text>
</comment>
<comment type="mass spectrometry" mass="4057.85" method="MALDI" evidence="3">
    <text>Monoisotopic mass.</text>
</comment>
<comment type="miscellaneous">
    <text evidence="3">Is abundant in venom, since it accounts for 45.2% of precursor counts.</text>
</comment>
<comment type="similarity">
    <text evidence="5">Belongs to the asilidin-12 family.</text>
</comment>
<reference key="1">
    <citation type="journal article" date="2018" name="Toxins">
        <title>Buzz kill: function and proteomic composition of venom from the giant assassin fly Dolopus genitalis (Diptera: Asilidae).</title>
        <authorList>
            <person name="Walker A.A."/>
            <person name="Dobson J."/>
            <person name="Jin J."/>
            <person name="Robinson S.D."/>
            <person name="Herzig V."/>
            <person name="Vetter I."/>
            <person name="King G.F."/>
            <person name="Fry B.G."/>
        </authorList>
    </citation>
    <scope>NUCLEOTIDE SEQUENCE [MRNA]</scope>
    <scope>MASS SPECTROMETRY</scope>
    <scope>SUBCELLULAR LOCATION</scope>
    <source>
        <tissue>Venom</tissue>
        <tissue>Venom gland</tissue>
    </source>
</reference>
<dbReference type="EMBL" id="MK075120">
    <property type="protein sequence ID" value="AYV99523.1"/>
    <property type="molecule type" value="mRNA"/>
</dbReference>
<dbReference type="SMR" id="A0A3G5BIB4"/>
<dbReference type="GO" id="GO:0005615">
    <property type="term" value="C:extracellular space"/>
    <property type="evidence" value="ECO:0007669"/>
    <property type="project" value="TreeGrafter"/>
</dbReference>
<dbReference type="GO" id="GO:0015459">
    <property type="term" value="F:potassium channel regulator activity"/>
    <property type="evidence" value="ECO:0007669"/>
    <property type="project" value="UniProtKB-KW"/>
</dbReference>
<dbReference type="GO" id="GO:0090729">
    <property type="term" value="F:toxin activity"/>
    <property type="evidence" value="ECO:0007669"/>
    <property type="project" value="UniProtKB-KW"/>
</dbReference>
<dbReference type="GO" id="GO:0050830">
    <property type="term" value="P:defense response to Gram-positive bacterium"/>
    <property type="evidence" value="ECO:0007669"/>
    <property type="project" value="UniProtKB-ARBA"/>
</dbReference>
<dbReference type="GO" id="GO:0006959">
    <property type="term" value="P:humoral immune response"/>
    <property type="evidence" value="ECO:0007669"/>
    <property type="project" value="TreeGrafter"/>
</dbReference>
<dbReference type="CDD" id="cd21806">
    <property type="entry name" value="DEFL_defensin-like"/>
    <property type="match status" value="1"/>
</dbReference>
<dbReference type="Gene3D" id="3.30.30.10">
    <property type="entry name" value="Knottin, scorpion toxin-like"/>
    <property type="match status" value="1"/>
</dbReference>
<dbReference type="InterPro" id="IPR001542">
    <property type="entry name" value="Defensin_invertebrate/fungal"/>
</dbReference>
<dbReference type="InterPro" id="IPR036574">
    <property type="entry name" value="Scorpion_toxin-like_sf"/>
</dbReference>
<dbReference type="PANTHER" id="PTHR13645">
    <property type="entry name" value="DEFENSIN"/>
    <property type="match status" value="1"/>
</dbReference>
<dbReference type="PANTHER" id="PTHR13645:SF0">
    <property type="entry name" value="DEFENSIN"/>
    <property type="match status" value="1"/>
</dbReference>
<dbReference type="Pfam" id="PF01097">
    <property type="entry name" value="Defensin_2"/>
    <property type="match status" value="1"/>
</dbReference>
<dbReference type="SUPFAM" id="SSF57095">
    <property type="entry name" value="Scorpion toxin-like"/>
    <property type="match status" value="1"/>
</dbReference>
<dbReference type="PROSITE" id="PS51378">
    <property type="entry name" value="INVERT_DEFENSINS"/>
    <property type="match status" value="1"/>
</dbReference>
<keyword id="KW-1015">Disulfide bond</keyword>
<keyword id="KW-0872">Ion channel impairing toxin</keyword>
<keyword id="KW-0528">Neurotoxin</keyword>
<keyword id="KW-0632">Potassium channel impairing toxin</keyword>
<keyword id="KW-0964">Secreted</keyword>
<keyword id="KW-0732">Signal</keyword>
<keyword id="KW-0800">Toxin</keyword>
<keyword id="KW-1220">Voltage-gated potassium channel impairing toxin</keyword>
<proteinExistence type="evidence at protein level"/>
<name>ASC3A_DOLGE</name>
<organism>
    <name type="scientific">Dolopus genitalis</name>
    <name type="common">Giant Australian assassin fly</name>
    <name type="synonym">Asilus genitalis</name>
    <dbReference type="NCBI Taxonomy" id="2488630"/>
    <lineage>
        <taxon>Eukaryota</taxon>
        <taxon>Metazoa</taxon>
        <taxon>Ecdysozoa</taxon>
        <taxon>Arthropoda</taxon>
        <taxon>Hexapoda</taxon>
        <taxon>Insecta</taxon>
        <taxon>Pterygota</taxon>
        <taxon>Neoptera</taxon>
        <taxon>Endopterygota</taxon>
        <taxon>Diptera</taxon>
        <taxon>Brachycera</taxon>
        <taxon>Muscomorpha</taxon>
        <taxon>Asiloidea</taxon>
        <taxon>Asilidae</taxon>
        <taxon>Asilinae</taxon>
        <taxon>Dolopus</taxon>
    </lineage>
</organism>
<protein>
    <recommendedName>
        <fullName evidence="4">U-Asilidin(12)-Dg3a</fullName>
    </recommendedName>
</protein>